<dbReference type="EMBL" id="AB075831">
    <property type="protein sequence ID" value="BAB85537.1"/>
    <property type="status" value="ALT_INIT"/>
    <property type="molecule type" value="mRNA"/>
</dbReference>
<dbReference type="EMBL" id="AK122649">
    <property type="protein sequence ID" value="BAG53641.1"/>
    <property type="molecule type" value="mRNA"/>
</dbReference>
<dbReference type="EMBL" id="CH471126">
    <property type="protein sequence ID" value="EAW57113.1"/>
    <property type="molecule type" value="Genomic_DNA"/>
</dbReference>
<dbReference type="EMBL" id="BC013013">
    <property type="protein sequence ID" value="AAH13013.1"/>
    <property type="molecule type" value="mRNA"/>
</dbReference>
<dbReference type="EMBL" id="AL833399">
    <property type="protein sequence ID" value="CAH10586.1"/>
    <property type="molecule type" value="mRNA"/>
</dbReference>
<dbReference type="CCDS" id="CCDS12598.1"/>
<dbReference type="RefSeq" id="NP_001300962.1">
    <property type="nucleotide sequence ID" value="NM_001314033.3"/>
</dbReference>
<dbReference type="RefSeq" id="NP_597701.1">
    <property type="nucleotide sequence ID" value="NM_133444.3"/>
</dbReference>
<dbReference type="SMR" id="Q8TF50"/>
<dbReference type="BioGRID" id="125475">
    <property type="interactions" value="81"/>
</dbReference>
<dbReference type="FunCoup" id="Q8TF50">
    <property type="interactions" value="1010"/>
</dbReference>
<dbReference type="IntAct" id="Q8TF50">
    <property type="interactions" value="74"/>
</dbReference>
<dbReference type="STRING" id="9606.ENSP00000301215"/>
<dbReference type="CarbonylDB" id="Q8TF50"/>
<dbReference type="GlyGen" id="Q8TF50">
    <property type="glycosylation" value="4 sites, 1 O-linked glycan (1 site)"/>
</dbReference>
<dbReference type="iPTMnet" id="Q8TF50"/>
<dbReference type="PhosphoSitePlus" id="Q8TF50"/>
<dbReference type="BioMuta" id="ZNF526"/>
<dbReference type="DMDM" id="158706495"/>
<dbReference type="jPOST" id="Q8TF50"/>
<dbReference type="MassIVE" id="Q8TF50"/>
<dbReference type="PaxDb" id="9606-ENSP00000301215"/>
<dbReference type="PeptideAtlas" id="Q8TF50"/>
<dbReference type="ProteomicsDB" id="74560"/>
<dbReference type="Pumba" id="Q8TF50"/>
<dbReference type="Antibodypedia" id="30899">
    <property type="antibodies" value="65 antibodies from 15 providers"/>
</dbReference>
<dbReference type="DNASU" id="116115"/>
<dbReference type="Ensembl" id="ENST00000301215.8">
    <property type="protein sequence ID" value="ENSP00000301215.2"/>
    <property type="gene ID" value="ENSG00000167625.12"/>
</dbReference>
<dbReference type="Ensembl" id="ENST00000710326.1">
    <property type="protein sequence ID" value="ENSP00000518206.1"/>
    <property type="gene ID" value="ENSG00000167625.12"/>
</dbReference>
<dbReference type="GeneID" id="116115"/>
<dbReference type="KEGG" id="hsa:116115"/>
<dbReference type="MANE-Select" id="ENST00000301215.8">
    <property type="protein sequence ID" value="ENSP00000301215.2"/>
    <property type="RefSeq nucleotide sequence ID" value="NM_133444.3"/>
    <property type="RefSeq protein sequence ID" value="NP_597701.1"/>
</dbReference>
<dbReference type="UCSC" id="uc002osz.2">
    <property type="organism name" value="human"/>
</dbReference>
<dbReference type="AGR" id="HGNC:29415"/>
<dbReference type="CTD" id="116115"/>
<dbReference type="DisGeNET" id="116115"/>
<dbReference type="GeneCards" id="ZNF526"/>
<dbReference type="HGNC" id="HGNC:29415">
    <property type="gene designation" value="ZNF526"/>
</dbReference>
<dbReference type="HPA" id="ENSG00000167625">
    <property type="expression patterns" value="Low tissue specificity"/>
</dbReference>
<dbReference type="MalaCards" id="ZNF526"/>
<dbReference type="MIM" id="614387">
    <property type="type" value="gene"/>
</dbReference>
<dbReference type="MIM" id="619877">
    <property type="type" value="phenotype"/>
</dbReference>
<dbReference type="neXtProt" id="NX_Q8TF50"/>
<dbReference type="OpenTargets" id="ENSG00000167625"/>
<dbReference type="Orphanet" id="528084">
    <property type="disease" value="Non-specific syndromic intellectual disability"/>
</dbReference>
<dbReference type="PharmGKB" id="PA134967668"/>
<dbReference type="VEuPathDB" id="HostDB:ENSG00000167625"/>
<dbReference type="eggNOG" id="KOG1721">
    <property type="taxonomic scope" value="Eukaryota"/>
</dbReference>
<dbReference type="GeneTree" id="ENSGT00940000162624"/>
<dbReference type="HOGENOM" id="CLU_002678_24_3_1"/>
<dbReference type="InParanoid" id="Q8TF50"/>
<dbReference type="OMA" id="DGPFQCG"/>
<dbReference type="OrthoDB" id="8922241at2759"/>
<dbReference type="PAN-GO" id="Q8TF50">
    <property type="GO annotations" value="4 GO annotations based on evolutionary models"/>
</dbReference>
<dbReference type="PhylomeDB" id="Q8TF50"/>
<dbReference type="TreeFam" id="TF350791"/>
<dbReference type="PathwayCommons" id="Q8TF50"/>
<dbReference type="SignaLink" id="Q8TF50"/>
<dbReference type="BioGRID-ORCS" id="116115">
    <property type="hits" value="15 hits in 1175 CRISPR screens"/>
</dbReference>
<dbReference type="ChiTaRS" id="ZNF526">
    <property type="organism name" value="human"/>
</dbReference>
<dbReference type="GenomeRNAi" id="116115"/>
<dbReference type="Pharos" id="Q8TF50">
    <property type="development level" value="Tdark"/>
</dbReference>
<dbReference type="PRO" id="PR:Q8TF50"/>
<dbReference type="Proteomes" id="UP000005640">
    <property type="component" value="Chromosome 19"/>
</dbReference>
<dbReference type="RNAct" id="Q8TF50">
    <property type="molecule type" value="protein"/>
</dbReference>
<dbReference type="Bgee" id="ENSG00000167625">
    <property type="expression patterns" value="Expressed in primordial germ cell in gonad and 109 other cell types or tissues"/>
</dbReference>
<dbReference type="ExpressionAtlas" id="Q8TF50">
    <property type="expression patterns" value="baseline and differential"/>
</dbReference>
<dbReference type="GO" id="GO:0005634">
    <property type="term" value="C:nucleus"/>
    <property type="evidence" value="ECO:0007669"/>
    <property type="project" value="UniProtKB-SubCell"/>
</dbReference>
<dbReference type="GO" id="GO:0003677">
    <property type="term" value="F:DNA binding"/>
    <property type="evidence" value="ECO:0007669"/>
    <property type="project" value="UniProtKB-KW"/>
</dbReference>
<dbReference type="GO" id="GO:0008270">
    <property type="term" value="F:zinc ion binding"/>
    <property type="evidence" value="ECO:0007669"/>
    <property type="project" value="UniProtKB-KW"/>
</dbReference>
<dbReference type="FunFam" id="3.30.160.60:FF:004072">
    <property type="match status" value="1"/>
</dbReference>
<dbReference type="FunFam" id="3.30.160.60:FF:000135">
    <property type="entry name" value="Zinc finger protein 358"/>
    <property type="match status" value="1"/>
</dbReference>
<dbReference type="FunFam" id="3.30.160.60:FF:002041">
    <property type="entry name" value="Zinc finger protein 526"/>
    <property type="match status" value="1"/>
</dbReference>
<dbReference type="FunFam" id="3.30.160.60:FF:002659">
    <property type="entry name" value="Zinc finger protein 526"/>
    <property type="match status" value="1"/>
</dbReference>
<dbReference type="Gene3D" id="3.30.160.60">
    <property type="entry name" value="Classic Zinc Finger"/>
    <property type="match status" value="8"/>
</dbReference>
<dbReference type="InterPro" id="IPR036236">
    <property type="entry name" value="Znf_C2H2_sf"/>
</dbReference>
<dbReference type="InterPro" id="IPR013087">
    <property type="entry name" value="Znf_C2H2_type"/>
</dbReference>
<dbReference type="PANTHER" id="PTHR24399">
    <property type="entry name" value="ZINC FINGER AND BTB DOMAIN-CONTAINING"/>
    <property type="match status" value="1"/>
</dbReference>
<dbReference type="PANTHER" id="PTHR24399:SF68">
    <property type="entry name" value="ZINC FINGER PROTEIN 358-RELATED"/>
    <property type="match status" value="1"/>
</dbReference>
<dbReference type="Pfam" id="PF00096">
    <property type="entry name" value="zf-C2H2"/>
    <property type="match status" value="3"/>
</dbReference>
<dbReference type="Pfam" id="PF13894">
    <property type="entry name" value="zf-C2H2_4"/>
    <property type="match status" value="1"/>
</dbReference>
<dbReference type="Pfam" id="PF13912">
    <property type="entry name" value="zf-C2H2_6"/>
    <property type="match status" value="1"/>
</dbReference>
<dbReference type="SMART" id="SM00355">
    <property type="entry name" value="ZnF_C2H2"/>
    <property type="match status" value="14"/>
</dbReference>
<dbReference type="SUPFAM" id="SSF57667">
    <property type="entry name" value="beta-beta-alpha zinc fingers"/>
    <property type="match status" value="7"/>
</dbReference>
<dbReference type="PROSITE" id="PS00028">
    <property type="entry name" value="ZINC_FINGER_C2H2_1"/>
    <property type="match status" value="12"/>
</dbReference>
<dbReference type="PROSITE" id="PS50157">
    <property type="entry name" value="ZINC_FINGER_C2H2_2"/>
    <property type="match status" value="11"/>
</dbReference>
<comment type="function">
    <text evidence="1">May be involved in transcriptional regulation.</text>
</comment>
<comment type="interaction">
    <interactant intactId="EBI-11035148">
        <id>Q8TF50</id>
    </interactant>
    <interactant intactId="EBI-742750">
        <id>Q8TBE0</id>
        <label>BAHD1</label>
    </interactant>
    <organismsDiffer>false</organismsDiffer>
    <experiments>3</experiments>
</comment>
<comment type="interaction">
    <interactant intactId="EBI-11035148">
        <id>Q8TF50</id>
    </interactant>
    <interactant intactId="EBI-715389">
        <id>Q9H7E9</id>
        <label>C8orf33</label>
    </interactant>
    <organismsDiffer>false</organismsDiffer>
    <experiments>3</experiments>
</comment>
<comment type="interaction">
    <interactant intactId="EBI-11035148">
        <id>Q8TF50</id>
    </interactant>
    <interactant intactId="EBI-719941">
        <id>Q3B820</id>
        <label>FAM161A</label>
    </interactant>
    <organismsDiffer>false</organismsDiffer>
    <experiments>3</experiments>
</comment>
<comment type="interaction">
    <interactant intactId="EBI-11035148">
        <id>Q8TF50</id>
    </interactant>
    <interactant intactId="EBI-6658203">
        <id>Q86YD7</id>
        <label>FAM90A1</label>
    </interactant>
    <organismsDiffer>false</organismsDiffer>
    <experiments>3</experiments>
</comment>
<comment type="interaction">
    <interactant intactId="EBI-11035148">
        <id>Q8TF50</id>
    </interactant>
    <interactant intactId="EBI-2513774">
        <id>O95363</id>
        <label>FARS2</label>
    </interactant>
    <organismsDiffer>false</organismsDiffer>
    <experiments>3</experiments>
</comment>
<comment type="interaction">
    <interactant intactId="EBI-11035148">
        <id>Q8TF50</id>
    </interactant>
    <interactant intactId="EBI-11959863">
        <id>Q9NWQ4-1</id>
        <label>GPATCH2L</label>
    </interactant>
    <organismsDiffer>false</organismsDiffer>
    <experiments>3</experiments>
</comment>
<comment type="interaction">
    <interactant intactId="EBI-11035148">
        <id>Q8TF50</id>
    </interactant>
    <interactant intactId="EBI-7060731">
        <id>P61978-2</id>
        <label>HNRNPK</label>
    </interactant>
    <organismsDiffer>false</organismsDiffer>
    <experiments>3</experiments>
</comment>
<comment type="interaction">
    <interactant intactId="EBI-11035148">
        <id>Q8TF50</id>
    </interactant>
    <interactant intactId="EBI-17178971">
        <id>Q14005-2</id>
        <label>IL16</label>
    </interactant>
    <organismsDiffer>false</organismsDiffer>
    <experiments>3</experiments>
</comment>
<comment type="interaction">
    <interactant intactId="EBI-11035148">
        <id>Q8TF50</id>
    </interactant>
    <interactant intactId="EBI-715611">
        <id>Q9C086</id>
        <label>INO80B</label>
    </interactant>
    <organismsDiffer>false</organismsDiffer>
    <experiments>3</experiments>
</comment>
<comment type="interaction">
    <interactant intactId="EBI-11035148">
        <id>Q8TF50</id>
    </interactant>
    <interactant intactId="EBI-10220600">
        <id>Q8NA54</id>
        <label>IQUB</label>
    </interactant>
    <organismsDiffer>false</organismsDiffer>
    <experiments>3</experiments>
</comment>
<comment type="interaction">
    <interactant intactId="EBI-11035148">
        <id>Q8TF50</id>
    </interactant>
    <interactant intactId="EBI-399080">
        <id>Q92993</id>
        <label>KAT5</label>
    </interactant>
    <organismsDiffer>false</organismsDiffer>
    <experiments>3</experiments>
</comment>
<comment type="interaction">
    <interactant intactId="EBI-11035148">
        <id>Q8TF50</id>
    </interactant>
    <interactant intactId="EBI-396343">
        <id>O00629</id>
        <label>KPNA4</label>
    </interactant>
    <organismsDiffer>false</organismsDiffer>
    <experiments>2</experiments>
</comment>
<comment type="interaction">
    <interactant intactId="EBI-11035148">
        <id>Q8TF50</id>
    </interactant>
    <interactant intactId="EBI-8639312">
        <id>P25800</id>
        <label>LMO1</label>
    </interactant>
    <organismsDiffer>false</organismsDiffer>
    <experiments>3</experiments>
</comment>
<comment type="interaction">
    <interactant intactId="EBI-11035148">
        <id>Q8TF50</id>
    </interactant>
    <interactant intactId="EBI-11742507">
        <id>Q8TAP4-4</id>
        <label>LMO3</label>
    </interactant>
    <organismsDiffer>false</organismsDiffer>
    <experiments>3</experiments>
</comment>
<comment type="interaction">
    <interactant intactId="EBI-11035148">
        <id>Q8TF50</id>
    </interactant>
    <interactant intactId="EBI-726739">
        <id>Q9UPY8</id>
        <label>MAPRE3</label>
    </interactant>
    <organismsDiffer>false</organismsDiffer>
    <experiments>3</experiments>
</comment>
<comment type="interaction">
    <interactant intactId="EBI-11035148">
        <id>Q8TF50</id>
    </interactant>
    <interactant intactId="EBI-5453723">
        <id>Q9Y3B7</id>
        <label>MRPL11</label>
    </interactant>
    <organismsDiffer>false</organismsDiffer>
    <experiments>3</experiments>
</comment>
<comment type="interaction">
    <interactant intactId="EBI-11035148">
        <id>Q8TF50</id>
    </interactant>
    <interactant intactId="EBI-713635">
        <id>O43639</id>
        <label>NCK2</label>
    </interactant>
    <organismsDiffer>false</organismsDiffer>
    <experiments>3</experiments>
</comment>
<comment type="interaction">
    <interactant intactId="EBI-11035148">
        <id>Q8TF50</id>
    </interactant>
    <interactant intactId="EBI-744782">
        <id>Q9Y5B8</id>
        <label>NME7</label>
    </interactant>
    <organismsDiffer>false</organismsDiffer>
    <experiments>3</experiments>
</comment>
<comment type="interaction">
    <interactant intactId="EBI-11035148">
        <id>Q8TF50</id>
    </interactant>
    <interactant intactId="EBI-13007247">
        <id>Q9BRP0</id>
        <label>OVOL2</label>
    </interactant>
    <organismsDiffer>false</organismsDiffer>
    <experiments>3</experiments>
</comment>
<comment type="interaction">
    <interactant intactId="EBI-11035148">
        <id>Q8TF50</id>
    </interactant>
    <interactant intactId="EBI-10892722">
        <id>Q6TGC4</id>
        <label>PADI6</label>
    </interactant>
    <organismsDiffer>false</organismsDiffer>
    <experiments>3</experiments>
</comment>
<comment type="interaction">
    <interactant intactId="EBI-11035148">
        <id>Q8TF50</id>
    </interactant>
    <interactant intactId="EBI-536853">
        <id>Q96KB5</id>
        <label>PBK</label>
    </interactant>
    <organismsDiffer>false</organismsDiffer>
    <experiments>3</experiments>
</comment>
<comment type="interaction">
    <interactant intactId="EBI-11035148">
        <id>Q8TF50</id>
    </interactant>
    <interactant intactId="EBI-530034">
        <id>O43189</id>
        <label>PHF1</label>
    </interactant>
    <organismsDiffer>false</organismsDiffer>
    <experiments>3</experiments>
</comment>
<comment type="interaction">
    <interactant intactId="EBI-11035148">
        <id>Q8TF50</id>
    </interactant>
    <interactant intactId="EBI-714158">
        <id>Q13526</id>
        <label>PIN1</label>
    </interactant>
    <organismsDiffer>false</organismsDiffer>
    <experiments>3</experiments>
</comment>
<comment type="interaction">
    <interactant intactId="EBI-11035148">
        <id>Q8TF50</id>
    </interactant>
    <interactant intactId="EBI-1053424">
        <id>O43741</id>
        <label>PRKAB2</label>
    </interactant>
    <organismsDiffer>false</organismsDiffer>
    <experiments>3</experiments>
</comment>
<comment type="interaction">
    <interactant intactId="EBI-11035148">
        <id>Q8TF50</id>
    </interactant>
    <interactant intactId="EBI-2798416">
        <id>Q99633</id>
        <label>PRPF18</label>
    </interactant>
    <organismsDiffer>false</organismsDiffer>
    <experiments>3</experiments>
</comment>
<comment type="interaction">
    <interactant intactId="EBI-11035148">
        <id>Q8TF50</id>
    </interactant>
    <interactant intactId="EBI-721525">
        <id>P98175</id>
        <label>RBM10</label>
    </interactant>
    <organismsDiffer>false</organismsDiffer>
    <experiments>3</experiments>
</comment>
<comment type="interaction">
    <interactant intactId="EBI-11035148">
        <id>Q8TF50</id>
    </interactant>
    <interactant intactId="EBI-748391">
        <id>Q9BWG6</id>
        <label>SCNM1</label>
    </interactant>
    <organismsDiffer>false</organismsDiffer>
    <experiments>3</experiments>
</comment>
<comment type="interaction">
    <interactant intactId="EBI-11035148">
        <id>Q8TF50</id>
    </interactant>
    <interactant intactId="EBI-714091">
        <id>P49903</id>
        <label>SEPHS1</label>
    </interactant>
    <organismsDiffer>false</organismsDiffer>
    <experiments>3</experiments>
</comment>
<comment type="interaction">
    <interactant intactId="EBI-11035148">
        <id>Q8TF50</id>
    </interactant>
    <interactant intactId="EBI-12023934">
        <id>Q5MJ10</id>
        <label>SPANXN2</label>
    </interactant>
    <organismsDiffer>false</organismsDiffer>
    <experiments>3</experiments>
</comment>
<comment type="interaction">
    <interactant intactId="EBI-11035148">
        <id>Q8TF50</id>
    </interactant>
    <interactant intactId="EBI-710310">
        <id>Q15560</id>
        <label>TCEA2</label>
    </interactant>
    <organismsDiffer>false</organismsDiffer>
    <experiments>3</experiments>
</comment>
<comment type="interaction">
    <interactant intactId="EBI-11035148">
        <id>Q8TF50</id>
    </interactant>
    <interactant intactId="EBI-741515">
        <id>Q9NVV9</id>
        <label>THAP1</label>
    </interactant>
    <organismsDiffer>false</organismsDiffer>
    <experiments>3</experiments>
</comment>
<comment type="interaction">
    <interactant intactId="EBI-11035148">
        <id>Q8TF50</id>
    </interactant>
    <interactant intactId="EBI-2828217">
        <id>O43422</id>
        <label>THAP12</label>
    </interactant>
    <organismsDiffer>false</organismsDiffer>
    <experiments>4</experiments>
</comment>
<comment type="interaction">
    <interactant intactId="EBI-11035148">
        <id>Q8TF50</id>
    </interactant>
    <interactant intactId="EBI-725997">
        <id>Q8WV44</id>
        <label>TRIM41</label>
    </interactant>
    <organismsDiffer>false</organismsDiffer>
    <experiments>3</experiments>
</comment>
<comment type="interaction">
    <interactant intactId="EBI-11035148">
        <id>Q8TF50</id>
    </interactant>
    <interactant intactId="EBI-11097439">
        <id>P26368-2</id>
        <label>U2AF2</label>
    </interactant>
    <organismsDiffer>false</organismsDiffer>
    <experiments>3</experiments>
</comment>
<comment type="interaction">
    <interactant intactId="EBI-11035148">
        <id>Q8TF50</id>
    </interactant>
    <interactant intactId="EBI-11983741">
        <id>Q3SXR9</id>
        <label>VCX2</label>
    </interactant>
    <organismsDiffer>false</organismsDiffer>
    <experiments>3</experiments>
</comment>
<comment type="interaction">
    <interactant intactId="EBI-11035148">
        <id>Q8TF50</id>
    </interactant>
    <interactant intactId="EBI-10300345">
        <id>Q9BW85</id>
        <label>YJU2</label>
    </interactant>
    <organismsDiffer>false</organismsDiffer>
    <experiments>3</experiments>
</comment>
<comment type="interaction">
    <interactant intactId="EBI-11035148">
        <id>Q8TF50</id>
    </interactant>
    <interactant intactId="EBI-744471">
        <id>O43167</id>
        <label>ZBTB24</label>
    </interactant>
    <organismsDiffer>false</organismsDiffer>
    <experiments>3</experiments>
</comment>
<comment type="interaction">
    <interactant intactId="EBI-11035148">
        <id>Q8TF50</id>
    </interactant>
    <interactant intactId="EBI-1052613">
        <id>Q96JP5</id>
        <label>ZFP91</label>
    </interactant>
    <organismsDiffer>false</organismsDiffer>
    <experiments>3</experiments>
</comment>
<comment type="interaction">
    <interactant intactId="EBI-11035148">
        <id>Q8TF50</id>
    </interactant>
    <interactant intactId="EBI-2555767">
        <id>Q15973</id>
        <label>ZNF124</label>
    </interactant>
    <organismsDiffer>false</organismsDiffer>
    <experiments>3</experiments>
</comment>
<comment type="interaction">
    <interactant intactId="EBI-11035148">
        <id>Q8TF50</id>
    </interactant>
    <interactant intactId="EBI-4395808">
        <id>O43296</id>
        <label>ZNF264</label>
    </interactant>
    <organismsDiffer>false</organismsDiffer>
    <experiments>3</experiments>
</comment>
<comment type="interaction">
    <interactant intactId="EBI-11035148">
        <id>Q8TF50</id>
    </interactant>
    <interactant intactId="EBI-347633">
        <id>Q9H9D4</id>
        <label>ZNF408</label>
    </interactant>
    <organismsDiffer>false</organismsDiffer>
    <experiments>3</experiments>
</comment>
<comment type="interaction">
    <interactant intactId="EBI-11035148">
        <id>Q8TF50</id>
    </interactant>
    <interactant intactId="EBI-11962468">
        <id>Q7Z4V0</id>
        <label>ZNF438</label>
    </interactant>
    <organismsDiffer>false</organismsDiffer>
    <experiments>3</experiments>
</comment>
<comment type="interaction">
    <interactant intactId="EBI-11035148">
        <id>Q8TF50</id>
    </interactant>
    <interactant intactId="EBI-10486136">
        <id>Q6ZNH5</id>
        <label>ZNF497</label>
    </interactant>
    <organismsDiffer>false</organismsDiffer>
    <experiments>3</experiments>
</comment>
<comment type="interaction">
    <interactant intactId="EBI-11035148">
        <id>Q8TF50</id>
    </interactant>
    <interactant intactId="EBI-10283126">
        <id>Q96C55</id>
        <label>ZNF524</label>
    </interactant>
    <organismsDiffer>false</organismsDiffer>
    <experiments>3</experiments>
</comment>
<comment type="interaction">
    <interactant intactId="EBI-11035148">
        <id>Q8TF50</id>
    </interactant>
    <interactant intactId="EBI-14069183">
        <id>Q86XF7</id>
        <label>ZNF575</label>
    </interactant>
    <organismsDiffer>false</organismsDiffer>
    <experiments>3</experiments>
</comment>
<comment type="interaction">
    <interactant intactId="EBI-11035148">
        <id>Q8TF50</id>
    </interactant>
    <interactant intactId="EBI-11955189">
        <id>Q96N58</id>
        <label>ZNF578</label>
    </interactant>
    <organismsDiffer>false</organismsDiffer>
    <experiments>3</experiments>
</comment>
<comment type="interaction">
    <interactant intactId="EBI-11035148">
        <id>Q8TF50</id>
    </interactant>
    <interactant intactId="EBI-11090299">
        <id>Q9H7X3</id>
        <label>ZNF696</label>
    </interactant>
    <organismsDiffer>false</organismsDiffer>
    <experiments>3</experiments>
</comment>
<comment type="interaction">
    <interactant intactId="EBI-11035148">
        <id>Q8TF50</id>
    </interactant>
    <interactant intactId="EBI-7254550">
        <id>P36508</id>
        <label>ZNF76</label>
    </interactant>
    <organismsDiffer>false</organismsDiffer>
    <experiments>3</experiments>
</comment>
<comment type="interaction">
    <interactant intactId="EBI-11035148">
        <id>Q8TF50</id>
    </interactant>
    <interactant intactId="EBI-10251462">
        <id>Q6NX45</id>
        <label>ZNF774</label>
    </interactant>
    <organismsDiffer>false</organismsDiffer>
    <experiments>3</experiments>
</comment>
<comment type="interaction">
    <interactant intactId="EBI-11035148">
        <id>Q8TF50</id>
    </interactant>
    <interactant intactId="EBI-10240849">
        <id>Q3KQV3</id>
        <label>ZNF792</label>
    </interactant>
    <organismsDiffer>false</organismsDiffer>
    <experiments>3</experiments>
</comment>
<comment type="interaction">
    <interactant intactId="EBI-11035148">
        <id>Q8TF50</id>
    </interactant>
    <interactant intactId="EBI-5667516">
        <id>Q9Y2P0</id>
        <label>ZNF835</label>
    </interactant>
    <organismsDiffer>false</organismsDiffer>
    <experiments>3</experiments>
</comment>
<comment type="interaction">
    <interactant intactId="EBI-11035148">
        <id>Q8TF50</id>
    </interactant>
    <interactant intactId="EBI-11962574">
        <id>Q96EG3</id>
        <label>ZNF837</label>
    </interactant>
    <organismsDiffer>false</organismsDiffer>
    <experiments>3</experiments>
</comment>
<comment type="subcellular location">
    <subcellularLocation>
        <location evidence="7">Nucleus</location>
    </subcellularLocation>
</comment>
<comment type="tissue specificity">
    <text evidence="6">Widely expressed.</text>
</comment>
<comment type="disease" evidence="5 6">
    <disease id="DI-06425">
        <name>Dentici-Novelli neurodevelopmental syndrome</name>
        <acronym>DENNED</acronym>
        <description>An autosomal recessive disorder characterized by global developmental delay and impaired intellectual development apparent from infancy. Disease severity is variable. More severely affected individuals have profound intellectual disability, axial hypotonia, peripheral spasticity, prenatal and postnatal microcephaly, early-onset seizures, brain imaging abnormalities, and are unable to walk or speak. Patients with a less severe phenotype may achieve some developmental goals and show less severe intellectual disability.</description>
        <dbReference type="MIM" id="619877"/>
    </disease>
    <text>The disease is caused by variants affecting the gene represented in this entry.</text>
</comment>
<comment type="similarity">
    <text evidence="7">Belongs to the krueppel C2H2-type zinc-finger protein family.</text>
</comment>
<comment type="sequence caution" evidence="7">
    <conflict type="erroneous initiation">
        <sequence resource="EMBL-CDS" id="BAB85537"/>
    </conflict>
</comment>
<reference key="1">
    <citation type="journal article" date="2001" name="DNA Res.">
        <title>Prediction of the coding sequences of unidentified human genes. XXII. The complete sequences of 50 new cDNA clones which code for large proteins.</title>
        <authorList>
            <person name="Nagase T."/>
            <person name="Kikuno R."/>
            <person name="Ohara O."/>
        </authorList>
    </citation>
    <scope>NUCLEOTIDE SEQUENCE [LARGE SCALE MRNA]</scope>
    <source>
        <tissue>Brain</tissue>
    </source>
</reference>
<reference key="2">
    <citation type="journal article" date="2004" name="Nat. Genet.">
        <title>Complete sequencing and characterization of 21,243 full-length human cDNAs.</title>
        <authorList>
            <person name="Ota T."/>
            <person name="Suzuki Y."/>
            <person name="Nishikawa T."/>
            <person name="Otsuki T."/>
            <person name="Sugiyama T."/>
            <person name="Irie R."/>
            <person name="Wakamatsu A."/>
            <person name="Hayashi K."/>
            <person name="Sato H."/>
            <person name="Nagai K."/>
            <person name="Kimura K."/>
            <person name="Makita H."/>
            <person name="Sekine M."/>
            <person name="Obayashi M."/>
            <person name="Nishi T."/>
            <person name="Shibahara T."/>
            <person name="Tanaka T."/>
            <person name="Ishii S."/>
            <person name="Yamamoto J."/>
            <person name="Saito K."/>
            <person name="Kawai Y."/>
            <person name="Isono Y."/>
            <person name="Nakamura Y."/>
            <person name="Nagahari K."/>
            <person name="Murakami K."/>
            <person name="Yasuda T."/>
            <person name="Iwayanagi T."/>
            <person name="Wagatsuma M."/>
            <person name="Shiratori A."/>
            <person name="Sudo H."/>
            <person name="Hosoiri T."/>
            <person name="Kaku Y."/>
            <person name="Kodaira H."/>
            <person name="Kondo H."/>
            <person name="Sugawara M."/>
            <person name="Takahashi M."/>
            <person name="Kanda K."/>
            <person name="Yokoi T."/>
            <person name="Furuya T."/>
            <person name="Kikkawa E."/>
            <person name="Omura Y."/>
            <person name="Abe K."/>
            <person name="Kamihara K."/>
            <person name="Katsuta N."/>
            <person name="Sato K."/>
            <person name="Tanikawa M."/>
            <person name="Yamazaki M."/>
            <person name="Ninomiya K."/>
            <person name="Ishibashi T."/>
            <person name="Yamashita H."/>
            <person name="Murakawa K."/>
            <person name="Fujimori K."/>
            <person name="Tanai H."/>
            <person name="Kimata M."/>
            <person name="Watanabe M."/>
            <person name="Hiraoka S."/>
            <person name="Chiba Y."/>
            <person name="Ishida S."/>
            <person name="Ono Y."/>
            <person name="Takiguchi S."/>
            <person name="Watanabe S."/>
            <person name="Yosida M."/>
            <person name="Hotuta T."/>
            <person name="Kusano J."/>
            <person name="Kanehori K."/>
            <person name="Takahashi-Fujii A."/>
            <person name="Hara H."/>
            <person name="Tanase T.-O."/>
            <person name="Nomura Y."/>
            <person name="Togiya S."/>
            <person name="Komai F."/>
            <person name="Hara R."/>
            <person name="Takeuchi K."/>
            <person name="Arita M."/>
            <person name="Imose N."/>
            <person name="Musashino K."/>
            <person name="Yuuki H."/>
            <person name="Oshima A."/>
            <person name="Sasaki N."/>
            <person name="Aotsuka S."/>
            <person name="Yoshikawa Y."/>
            <person name="Matsunawa H."/>
            <person name="Ichihara T."/>
            <person name="Shiohata N."/>
            <person name="Sano S."/>
            <person name="Moriya S."/>
            <person name="Momiyama H."/>
            <person name="Satoh N."/>
            <person name="Takami S."/>
            <person name="Terashima Y."/>
            <person name="Suzuki O."/>
            <person name="Nakagawa S."/>
            <person name="Senoh A."/>
            <person name="Mizoguchi H."/>
            <person name="Goto Y."/>
            <person name="Shimizu F."/>
            <person name="Wakebe H."/>
            <person name="Hishigaki H."/>
            <person name="Watanabe T."/>
            <person name="Sugiyama A."/>
            <person name="Takemoto M."/>
            <person name="Kawakami B."/>
            <person name="Yamazaki M."/>
            <person name="Watanabe K."/>
            <person name="Kumagai A."/>
            <person name="Itakura S."/>
            <person name="Fukuzumi Y."/>
            <person name="Fujimori Y."/>
            <person name="Komiyama M."/>
            <person name="Tashiro H."/>
            <person name="Tanigami A."/>
            <person name="Fujiwara T."/>
            <person name="Ono T."/>
            <person name="Yamada K."/>
            <person name="Fujii Y."/>
            <person name="Ozaki K."/>
            <person name="Hirao M."/>
            <person name="Ohmori Y."/>
            <person name="Kawabata A."/>
            <person name="Hikiji T."/>
            <person name="Kobatake N."/>
            <person name="Inagaki H."/>
            <person name="Ikema Y."/>
            <person name="Okamoto S."/>
            <person name="Okitani R."/>
            <person name="Kawakami T."/>
            <person name="Noguchi S."/>
            <person name="Itoh T."/>
            <person name="Shigeta K."/>
            <person name="Senba T."/>
            <person name="Matsumura K."/>
            <person name="Nakajima Y."/>
            <person name="Mizuno T."/>
            <person name="Morinaga M."/>
            <person name="Sasaki M."/>
            <person name="Togashi T."/>
            <person name="Oyama M."/>
            <person name="Hata H."/>
            <person name="Watanabe M."/>
            <person name="Komatsu T."/>
            <person name="Mizushima-Sugano J."/>
            <person name="Satoh T."/>
            <person name="Shirai Y."/>
            <person name="Takahashi Y."/>
            <person name="Nakagawa K."/>
            <person name="Okumura K."/>
            <person name="Nagase T."/>
            <person name="Nomura N."/>
            <person name="Kikuchi H."/>
            <person name="Masuho Y."/>
            <person name="Yamashita R."/>
            <person name="Nakai K."/>
            <person name="Yada T."/>
            <person name="Nakamura Y."/>
            <person name="Ohara O."/>
            <person name="Isogai T."/>
            <person name="Sugano S."/>
        </authorList>
    </citation>
    <scope>NUCLEOTIDE SEQUENCE [LARGE SCALE MRNA]</scope>
</reference>
<reference key="3">
    <citation type="submission" date="2005-07" db="EMBL/GenBank/DDBJ databases">
        <authorList>
            <person name="Mural R.J."/>
            <person name="Istrail S."/>
            <person name="Sutton G.G."/>
            <person name="Florea L."/>
            <person name="Halpern A.L."/>
            <person name="Mobarry C.M."/>
            <person name="Lippert R."/>
            <person name="Walenz B."/>
            <person name="Shatkay H."/>
            <person name="Dew I."/>
            <person name="Miller J.R."/>
            <person name="Flanigan M.J."/>
            <person name="Edwards N.J."/>
            <person name="Bolanos R."/>
            <person name="Fasulo D."/>
            <person name="Halldorsson B.V."/>
            <person name="Hannenhalli S."/>
            <person name="Turner R."/>
            <person name="Yooseph S."/>
            <person name="Lu F."/>
            <person name="Nusskern D.R."/>
            <person name="Shue B.C."/>
            <person name="Zheng X.H."/>
            <person name="Zhong F."/>
            <person name="Delcher A.L."/>
            <person name="Huson D.H."/>
            <person name="Kravitz S.A."/>
            <person name="Mouchard L."/>
            <person name="Reinert K."/>
            <person name="Remington K.A."/>
            <person name="Clark A.G."/>
            <person name="Waterman M.S."/>
            <person name="Eichler E.E."/>
            <person name="Adams M.D."/>
            <person name="Hunkapiller M.W."/>
            <person name="Myers E.W."/>
            <person name="Venter J.C."/>
        </authorList>
    </citation>
    <scope>NUCLEOTIDE SEQUENCE [LARGE SCALE GENOMIC DNA]</scope>
</reference>
<reference key="4">
    <citation type="journal article" date="2004" name="Genome Res.">
        <title>The status, quality, and expansion of the NIH full-length cDNA project: the Mammalian Gene Collection (MGC).</title>
        <authorList>
            <consortium name="The MGC Project Team"/>
        </authorList>
    </citation>
    <scope>NUCLEOTIDE SEQUENCE [LARGE SCALE MRNA]</scope>
    <scope>VARIANT PHE-511</scope>
    <source>
        <tissue>Muscle</tissue>
    </source>
</reference>
<reference key="5">
    <citation type="journal article" date="2007" name="BMC Genomics">
        <title>The full-ORF clone resource of the German cDNA consortium.</title>
        <authorList>
            <person name="Bechtel S."/>
            <person name="Rosenfelder H."/>
            <person name="Duda A."/>
            <person name="Schmidt C.P."/>
            <person name="Ernst U."/>
            <person name="Wellenreuther R."/>
            <person name="Mehrle A."/>
            <person name="Schuster C."/>
            <person name="Bahr A."/>
            <person name="Bloecker H."/>
            <person name="Heubner D."/>
            <person name="Hoerlein A."/>
            <person name="Michel G."/>
            <person name="Wedler H."/>
            <person name="Koehrer K."/>
            <person name="Ottenwaelder B."/>
            <person name="Poustka A."/>
            <person name="Wiemann S."/>
            <person name="Schupp I."/>
        </authorList>
    </citation>
    <scope>NUCLEOTIDE SEQUENCE [LARGE SCALE MRNA] OF 210-670</scope>
    <source>
        <tissue>Melanoma</tissue>
    </source>
</reference>
<reference key="6">
    <citation type="journal article" date="2015" name="Cell Rep.">
        <title>Accelerating novel candidate gene discovery in neurogenetic disorders via whole-exome sequencing of prescreened multiplex consanguineous families.</title>
        <authorList>
            <person name="Alazami A.M."/>
            <person name="Patel N."/>
            <person name="Shamseldin H.E."/>
            <person name="Anazi S."/>
            <person name="Al-Dosari M.S."/>
            <person name="Alzahrani F."/>
            <person name="Hijazi H."/>
            <person name="Alshammari M."/>
            <person name="Aldahmesh M.A."/>
            <person name="Salih M.A."/>
            <person name="Faqeih E."/>
            <person name="Alhashem A."/>
            <person name="Bashiri F.A."/>
            <person name="Al-Owain M."/>
            <person name="Kentab A.Y."/>
            <person name="Sogaty S."/>
            <person name="Al Tala S."/>
            <person name="Temsah M.H."/>
            <person name="Tulbah M."/>
            <person name="Aljelaify R.F."/>
            <person name="Alshahwan S.A."/>
            <person name="Seidahmed M.Z."/>
            <person name="Alhadid A.A."/>
            <person name="Aldhalaan H."/>
            <person name="Alqallaf F."/>
            <person name="Kurdi W."/>
            <person name="Alfadhel M."/>
            <person name="Babay Z."/>
            <person name="Alsogheer M."/>
            <person name="Kaya N."/>
            <person name="Al-Hassnan Z.N."/>
            <person name="Abdel-Salam G.M."/>
            <person name="Al-Sannaa N."/>
            <person name="Al Mutairi F."/>
            <person name="El Khashab H.Y."/>
            <person name="Bohlega S."/>
            <person name="Jia X."/>
            <person name="Nguyen H.C."/>
            <person name="Hammami R."/>
            <person name="Adly N."/>
            <person name="Mohamed J.Y."/>
            <person name="Abdulwahab F."/>
            <person name="Ibrahim N."/>
            <person name="Naim E.A."/>
            <person name="Al-Younes B."/>
            <person name="Meyer B.F."/>
            <person name="Hashem M."/>
            <person name="Shaheen R."/>
            <person name="Xiong Y."/>
            <person name="Abouelhoda M."/>
            <person name="Aldeeri A.A."/>
            <person name="Monies D.M."/>
            <person name="Alkuraya F.S."/>
        </authorList>
    </citation>
    <scope>VARIANT DENNED THR-160</scope>
    <scope>INVOLVEMENT IN DENNED</scope>
</reference>
<reference key="7">
    <citation type="journal article" date="2022" name="J. Med. Genet.">
        <title>Biallelic variants in ZNF526 cause a severe neurodevelopmental disorder with microcephaly, bilateral cataract, epilepsy and simplified gyration.</title>
        <authorList>
            <person name="Dentici M.L."/>
            <person name="Alesi V."/>
            <person name="Quinodoz M."/>
            <person name="Robens B."/>
            <person name="Guerin A."/>
            <person name="Lebon S."/>
            <person name="Poduri A."/>
            <person name="Travaglini L."/>
            <person name="Graziola F."/>
            <person name="Afenjar A."/>
            <person name="Keren B."/>
            <person name="Licursi V."/>
            <person name="Capuano A."/>
            <person name="Dallapiccola B."/>
            <person name="Superti-Furga A."/>
            <person name="Novelli A."/>
        </authorList>
    </citation>
    <scope>VARIANT DENNED GLN-409</scope>
    <scope>INVOLVEMENT IN DENNED</scope>
    <scope>TISSUE SPECIFICITY</scope>
</reference>
<proteinExistence type="evidence at protein level"/>
<sequence>MAEVVAEVAEMPTQMSPGAVEMSTPMSAEMMEMSTEVTEMTPGEALASSLFFQHHQFMCSECGSLYNTLEEVLSHQEQHMLAVSEEEALTTQNVGLEPELVPGAEGPFQCGECSQLILSPGELLAHQDAHLRESANQIQYQCWDCQELFPSPELWVAHRKAQHLSATVAEPPVPPPLPPPTPLPPPSPPSEVKMEPYECPECSTLCATPEEFLEHQGTHFDSLEKEERNGLEEEEEDDEEDEEDDEEMEDEEAMAEVGDDAVGGDESTAGWAQGCGDCPQHQPSAGARRQHRRTAHSPASATHPFHCSQCQRSFSSANRLQAHGRAHVGGTHECTTCSKVFKKAASLEQHLRLHRGEARYLCVDCGRGFGTELTLVAHRRAHTANPLHRCRCGKTFSNMTKFLYHRRTHAGKSGAPPTGATAPPAPAEPTPPPPPPAPPAQLPCPQCSKSFASASRLSRHRRAVHGPPERRHRCGVCGKGFKKLIHVRNHLRTHTGERPFQCHSCGKTFASLANLSRHQLTHTGARPYQCLDCGKRFTQSSNLQQHRRLHLRPVAFARAPRLPITGLYNKSPYYCGTCGRWFRAMAGLRLHQRVHARARTLTLQPPRSPSPAPPPPPEPQQTIMCTELGETIAIIETSQPLALEDTLQLCQAALGASEAGGLLQLDTAFV</sequence>
<protein>
    <recommendedName>
        <fullName>Zinc finger protein 526</fullName>
    </recommendedName>
</protein>
<name>ZN526_HUMAN</name>
<accession>Q8TF50</accession>
<accession>B3KV29</accession>
<accession>Q69YI2</accession>
<accession>Q96E24</accession>
<evidence type="ECO:0000250" key="1"/>
<evidence type="ECO:0000255" key="2">
    <source>
        <dbReference type="PROSITE-ProRule" id="PRU00042"/>
    </source>
</evidence>
<evidence type="ECO:0000256" key="3">
    <source>
        <dbReference type="SAM" id="MobiDB-lite"/>
    </source>
</evidence>
<evidence type="ECO:0000269" key="4">
    <source>
    </source>
</evidence>
<evidence type="ECO:0000269" key="5">
    <source>
    </source>
</evidence>
<evidence type="ECO:0000269" key="6">
    <source>
    </source>
</evidence>
<evidence type="ECO:0000305" key="7"/>
<gene>
    <name type="primary">ZNF526</name>
    <name type="synonym">KIAA1951</name>
</gene>
<keyword id="KW-0238">DNA-binding</keyword>
<keyword id="KW-0887">Epilepsy</keyword>
<keyword id="KW-0991">Intellectual disability</keyword>
<keyword id="KW-0479">Metal-binding</keyword>
<keyword id="KW-0539">Nucleus</keyword>
<keyword id="KW-1267">Proteomics identification</keyword>
<keyword id="KW-1185">Reference proteome</keyword>
<keyword id="KW-0677">Repeat</keyword>
<keyword id="KW-0804">Transcription</keyword>
<keyword id="KW-0805">Transcription regulation</keyword>
<keyword id="KW-0862">Zinc</keyword>
<keyword id="KW-0863">Zinc-finger</keyword>
<organism>
    <name type="scientific">Homo sapiens</name>
    <name type="common">Human</name>
    <dbReference type="NCBI Taxonomy" id="9606"/>
    <lineage>
        <taxon>Eukaryota</taxon>
        <taxon>Metazoa</taxon>
        <taxon>Chordata</taxon>
        <taxon>Craniata</taxon>
        <taxon>Vertebrata</taxon>
        <taxon>Euteleostomi</taxon>
        <taxon>Mammalia</taxon>
        <taxon>Eutheria</taxon>
        <taxon>Euarchontoglires</taxon>
        <taxon>Primates</taxon>
        <taxon>Haplorrhini</taxon>
        <taxon>Catarrhini</taxon>
        <taxon>Hominidae</taxon>
        <taxon>Homo</taxon>
    </lineage>
</organism>
<feature type="chain" id="PRO_0000306875" description="Zinc finger protein 526">
    <location>
        <begin position="1"/>
        <end position="670"/>
    </location>
</feature>
<feature type="zinc finger region" description="C2H2-type 1" evidence="2">
    <location>
        <begin position="57"/>
        <end position="79"/>
    </location>
</feature>
<feature type="zinc finger region" description="C2H2-type 2" evidence="2">
    <location>
        <begin position="108"/>
        <end position="130"/>
    </location>
</feature>
<feature type="zinc finger region" description="C2H2-type 3" evidence="2">
    <location>
        <begin position="140"/>
        <end position="163"/>
    </location>
</feature>
<feature type="zinc finger region" description="C2H2-type 4" evidence="2">
    <location>
        <begin position="197"/>
        <end position="219"/>
    </location>
</feature>
<feature type="zinc finger region" description="C2H2-type 5" evidence="2">
    <location>
        <begin position="305"/>
        <end position="327"/>
    </location>
</feature>
<feature type="zinc finger region" description="C2H2-type 6" evidence="2">
    <location>
        <begin position="332"/>
        <end position="354"/>
    </location>
</feature>
<feature type="zinc finger region" description="C2H2-type 7" evidence="2">
    <location>
        <begin position="360"/>
        <end position="382"/>
    </location>
</feature>
<feature type="zinc finger region" description="C2H2-type 8" evidence="2">
    <location>
        <begin position="388"/>
        <end position="409"/>
    </location>
</feature>
<feature type="zinc finger region" description="C2H2-type 9" evidence="2">
    <location>
        <begin position="442"/>
        <end position="465"/>
    </location>
</feature>
<feature type="zinc finger region" description="C2H2-type 10" evidence="2">
    <location>
        <begin position="472"/>
        <end position="494"/>
    </location>
</feature>
<feature type="zinc finger region" description="C2H2-type 11" evidence="2">
    <location>
        <begin position="500"/>
        <end position="522"/>
    </location>
</feature>
<feature type="zinc finger region" description="C2H2-type 12" evidence="2">
    <location>
        <begin position="528"/>
        <end position="550"/>
    </location>
</feature>
<feature type="zinc finger region" description="C2H2-type 13" evidence="2">
    <location>
        <begin position="573"/>
        <end position="595"/>
    </location>
</feature>
<feature type="region of interest" description="Disordered" evidence="3">
    <location>
        <begin position="168"/>
        <end position="196"/>
    </location>
</feature>
<feature type="region of interest" description="Disordered" evidence="3">
    <location>
        <begin position="217"/>
        <end position="304"/>
    </location>
</feature>
<feature type="region of interest" description="Disordered" evidence="3">
    <location>
        <begin position="409"/>
        <end position="443"/>
    </location>
</feature>
<feature type="region of interest" description="Disordered" evidence="3">
    <location>
        <begin position="601"/>
        <end position="621"/>
    </location>
</feature>
<feature type="compositionally biased region" description="Pro residues" evidence="3">
    <location>
        <begin position="171"/>
        <end position="189"/>
    </location>
</feature>
<feature type="compositionally biased region" description="Basic and acidic residues" evidence="3">
    <location>
        <begin position="217"/>
        <end position="231"/>
    </location>
</feature>
<feature type="compositionally biased region" description="Acidic residues" evidence="3">
    <location>
        <begin position="232"/>
        <end position="263"/>
    </location>
</feature>
<feature type="compositionally biased region" description="Pro residues" evidence="3">
    <location>
        <begin position="423"/>
        <end position="442"/>
    </location>
</feature>
<feature type="compositionally biased region" description="Pro residues" evidence="3">
    <location>
        <begin position="606"/>
        <end position="619"/>
    </location>
</feature>
<feature type="sequence variant" id="VAR_035331" description="In dbSNP:rs3810151.">
    <original>V</original>
    <variation>A</variation>
    <location>
        <position position="94"/>
    </location>
</feature>
<feature type="sequence variant" id="VAR_087342" description="In DENNED; uncertain significance; dbSNP:rs730882205." evidence="5">
    <original>K</original>
    <variation>T</variation>
    <location>
        <position position="160"/>
    </location>
</feature>
<feature type="sequence variant" id="VAR_087343" description="In DENNED; uncertain significance." evidence="6">
    <original>H</original>
    <variation>Q</variation>
    <location>
        <position position="409"/>
    </location>
</feature>
<feature type="sequence variant" id="VAR_035332" description="In dbSNP:rs17850994." evidence="4">
    <original>S</original>
    <variation>F</variation>
    <location>
        <position position="511"/>
    </location>
</feature>